<organism>
    <name type="scientific">Rhodopseudomonas palustris (strain HaA2)</name>
    <dbReference type="NCBI Taxonomy" id="316058"/>
    <lineage>
        <taxon>Bacteria</taxon>
        <taxon>Pseudomonadati</taxon>
        <taxon>Pseudomonadota</taxon>
        <taxon>Alphaproteobacteria</taxon>
        <taxon>Hyphomicrobiales</taxon>
        <taxon>Nitrobacteraceae</taxon>
        <taxon>Rhodopseudomonas</taxon>
    </lineage>
</organism>
<feature type="chain" id="PRO_1000062664" description="Acetyl-coenzyme A carboxylase carboxyl transferase subunit alpha">
    <location>
        <begin position="1"/>
        <end position="320"/>
    </location>
</feature>
<feature type="domain" description="CoA carboxyltransferase C-terminal" evidence="2">
    <location>
        <begin position="42"/>
        <end position="295"/>
    </location>
</feature>
<sequence>MSEPMRSYLDFEKPVAELDSKIDELRALAASGSDIHEEVAKIEEKAVQALNELYATLTPWQKTQVARHPQRPHCVDYIEGLITEFTPLAGDRKFGEDEALIGGFGRFRGESICVIGQEKGSSTETRLKHNFGMARPEGYRKAVRLMDMADRFGIPVLSLVDTAGAYPGIGAEERGQAEAIARSTDACLSLGVPNVAVVIGEGGSGGAIAIATANKVLMLEHAIYSVISPEAASSILWRDGTKAQEAANSMKITAQDLLRFGVIDQILPEPKGGAHRDPAAMIATTGDAIAAAFAELAGLDAGTVRARRRQKFLEIGRKLG</sequence>
<protein>
    <recommendedName>
        <fullName evidence="1">Acetyl-coenzyme A carboxylase carboxyl transferase subunit alpha</fullName>
        <shortName evidence="1">ACCase subunit alpha</shortName>
        <shortName evidence="1">Acetyl-CoA carboxylase carboxyltransferase subunit alpha</shortName>
        <ecNumber evidence="1">2.1.3.15</ecNumber>
    </recommendedName>
</protein>
<dbReference type="EC" id="2.1.3.15" evidence="1"/>
<dbReference type="EMBL" id="CP000250">
    <property type="protein sequence ID" value="ABD05243.1"/>
    <property type="molecule type" value="Genomic_DNA"/>
</dbReference>
<dbReference type="RefSeq" id="WP_011439433.1">
    <property type="nucleotide sequence ID" value="NC_007778.1"/>
</dbReference>
<dbReference type="SMR" id="Q2J2R7"/>
<dbReference type="STRING" id="316058.RPB_0532"/>
<dbReference type="KEGG" id="rpb:RPB_0532"/>
<dbReference type="eggNOG" id="COG0825">
    <property type="taxonomic scope" value="Bacteria"/>
</dbReference>
<dbReference type="HOGENOM" id="CLU_015486_0_2_5"/>
<dbReference type="OrthoDB" id="9808023at2"/>
<dbReference type="UniPathway" id="UPA00655">
    <property type="reaction ID" value="UER00711"/>
</dbReference>
<dbReference type="Proteomes" id="UP000008809">
    <property type="component" value="Chromosome"/>
</dbReference>
<dbReference type="GO" id="GO:0009317">
    <property type="term" value="C:acetyl-CoA carboxylase complex"/>
    <property type="evidence" value="ECO:0007669"/>
    <property type="project" value="InterPro"/>
</dbReference>
<dbReference type="GO" id="GO:0003989">
    <property type="term" value="F:acetyl-CoA carboxylase activity"/>
    <property type="evidence" value="ECO:0007669"/>
    <property type="project" value="InterPro"/>
</dbReference>
<dbReference type="GO" id="GO:0005524">
    <property type="term" value="F:ATP binding"/>
    <property type="evidence" value="ECO:0007669"/>
    <property type="project" value="UniProtKB-KW"/>
</dbReference>
<dbReference type="GO" id="GO:0016743">
    <property type="term" value="F:carboxyl- or carbamoyltransferase activity"/>
    <property type="evidence" value="ECO:0007669"/>
    <property type="project" value="UniProtKB-UniRule"/>
</dbReference>
<dbReference type="GO" id="GO:0006633">
    <property type="term" value="P:fatty acid biosynthetic process"/>
    <property type="evidence" value="ECO:0007669"/>
    <property type="project" value="UniProtKB-KW"/>
</dbReference>
<dbReference type="GO" id="GO:2001295">
    <property type="term" value="P:malonyl-CoA biosynthetic process"/>
    <property type="evidence" value="ECO:0007669"/>
    <property type="project" value="UniProtKB-UniRule"/>
</dbReference>
<dbReference type="Gene3D" id="3.90.226.10">
    <property type="entry name" value="2-enoyl-CoA Hydratase, Chain A, domain 1"/>
    <property type="match status" value="1"/>
</dbReference>
<dbReference type="HAMAP" id="MF_00823">
    <property type="entry name" value="AcetylCoA_CT_alpha"/>
    <property type="match status" value="1"/>
</dbReference>
<dbReference type="InterPro" id="IPR001095">
    <property type="entry name" value="Acetyl_CoA_COase_a_su"/>
</dbReference>
<dbReference type="InterPro" id="IPR029045">
    <property type="entry name" value="ClpP/crotonase-like_dom_sf"/>
</dbReference>
<dbReference type="InterPro" id="IPR011763">
    <property type="entry name" value="COA_CT_C"/>
</dbReference>
<dbReference type="NCBIfam" id="TIGR00513">
    <property type="entry name" value="accA"/>
    <property type="match status" value="1"/>
</dbReference>
<dbReference type="NCBIfam" id="NF041504">
    <property type="entry name" value="AccA_sub"/>
    <property type="match status" value="1"/>
</dbReference>
<dbReference type="NCBIfam" id="NF004344">
    <property type="entry name" value="PRK05724.1"/>
    <property type="match status" value="1"/>
</dbReference>
<dbReference type="PANTHER" id="PTHR42853">
    <property type="entry name" value="ACETYL-COENZYME A CARBOXYLASE CARBOXYL TRANSFERASE SUBUNIT ALPHA"/>
    <property type="match status" value="1"/>
</dbReference>
<dbReference type="PANTHER" id="PTHR42853:SF3">
    <property type="entry name" value="ACETYL-COENZYME A CARBOXYLASE CARBOXYL TRANSFERASE SUBUNIT ALPHA, CHLOROPLASTIC"/>
    <property type="match status" value="1"/>
</dbReference>
<dbReference type="Pfam" id="PF03255">
    <property type="entry name" value="ACCA"/>
    <property type="match status" value="1"/>
</dbReference>
<dbReference type="PRINTS" id="PR01069">
    <property type="entry name" value="ACCCTRFRASEA"/>
</dbReference>
<dbReference type="SUPFAM" id="SSF52096">
    <property type="entry name" value="ClpP/crotonase"/>
    <property type="match status" value="1"/>
</dbReference>
<dbReference type="PROSITE" id="PS50989">
    <property type="entry name" value="COA_CT_CTER"/>
    <property type="match status" value="1"/>
</dbReference>
<proteinExistence type="inferred from homology"/>
<keyword id="KW-0067">ATP-binding</keyword>
<keyword id="KW-0963">Cytoplasm</keyword>
<keyword id="KW-0275">Fatty acid biosynthesis</keyword>
<keyword id="KW-0276">Fatty acid metabolism</keyword>
<keyword id="KW-0444">Lipid biosynthesis</keyword>
<keyword id="KW-0443">Lipid metabolism</keyword>
<keyword id="KW-0547">Nucleotide-binding</keyword>
<keyword id="KW-1185">Reference proteome</keyword>
<keyword id="KW-0808">Transferase</keyword>
<accession>Q2J2R7</accession>
<name>ACCA_RHOP2</name>
<gene>
    <name evidence="1" type="primary">accA</name>
    <name type="ordered locus">RPB_0532</name>
</gene>
<comment type="function">
    <text evidence="1">Component of the acetyl coenzyme A carboxylase (ACC) complex. First, biotin carboxylase catalyzes the carboxylation of biotin on its carrier protein (BCCP) and then the CO(2) group is transferred by the carboxyltransferase to acetyl-CoA to form malonyl-CoA.</text>
</comment>
<comment type="catalytic activity">
    <reaction evidence="1">
        <text>N(6)-carboxybiotinyl-L-lysyl-[protein] + acetyl-CoA = N(6)-biotinyl-L-lysyl-[protein] + malonyl-CoA</text>
        <dbReference type="Rhea" id="RHEA:54728"/>
        <dbReference type="Rhea" id="RHEA-COMP:10505"/>
        <dbReference type="Rhea" id="RHEA-COMP:10506"/>
        <dbReference type="ChEBI" id="CHEBI:57288"/>
        <dbReference type="ChEBI" id="CHEBI:57384"/>
        <dbReference type="ChEBI" id="CHEBI:83144"/>
        <dbReference type="ChEBI" id="CHEBI:83145"/>
        <dbReference type="EC" id="2.1.3.15"/>
    </reaction>
</comment>
<comment type="pathway">
    <text evidence="1">Lipid metabolism; malonyl-CoA biosynthesis; malonyl-CoA from acetyl-CoA: step 1/1.</text>
</comment>
<comment type="subunit">
    <text evidence="1">Acetyl-CoA carboxylase is a heterohexamer composed of biotin carboxyl carrier protein (AccB), biotin carboxylase (AccC) and two subunits each of ACCase subunit alpha (AccA) and ACCase subunit beta (AccD).</text>
</comment>
<comment type="subcellular location">
    <subcellularLocation>
        <location evidence="1">Cytoplasm</location>
    </subcellularLocation>
</comment>
<comment type="similarity">
    <text evidence="1">Belongs to the AccA family.</text>
</comment>
<evidence type="ECO:0000255" key="1">
    <source>
        <dbReference type="HAMAP-Rule" id="MF_00823"/>
    </source>
</evidence>
<evidence type="ECO:0000255" key="2">
    <source>
        <dbReference type="PROSITE-ProRule" id="PRU01137"/>
    </source>
</evidence>
<reference key="1">
    <citation type="submission" date="2006-01" db="EMBL/GenBank/DDBJ databases">
        <title>Complete sequence of Rhodopseudomonas palustris HaA2.</title>
        <authorList>
            <consortium name="US DOE Joint Genome Institute"/>
            <person name="Copeland A."/>
            <person name="Lucas S."/>
            <person name="Lapidus A."/>
            <person name="Barry K."/>
            <person name="Detter J.C."/>
            <person name="Glavina T."/>
            <person name="Hammon N."/>
            <person name="Israni S."/>
            <person name="Pitluck S."/>
            <person name="Chain P."/>
            <person name="Malfatti S."/>
            <person name="Shin M."/>
            <person name="Vergez L."/>
            <person name="Schmutz J."/>
            <person name="Larimer F."/>
            <person name="Land M."/>
            <person name="Hauser L."/>
            <person name="Pelletier D.A."/>
            <person name="Kyrpides N."/>
            <person name="Anderson I."/>
            <person name="Oda Y."/>
            <person name="Harwood C.S."/>
            <person name="Richardson P."/>
        </authorList>
    </citation>
    <scope>NUCLEOTIDE SEQUENCE [LARGE SCALE GENOMIC DNA]</scope>
    <source>
        <strain>HaA2</strain>
    </source>
</reference>